<accession>Q54HW1</accession>
<organism>
    <name type="scientific">Dictyostelium discoideum</name>
    <name type="common">Social amoeba</name>
    <dbReference type="NCBI Taxonomy" id="44689"/>
    <lineage>
        <taxon>Eukaryota</taxon>
        <taxon>Amoebozoa</taxon>
        <taxon>Evosea</taxon>
        <taxon>Eumycetozoa</taxon>
        <taxon>Dictyostelia</taxon>
        <taxon>Dictyosteliales</taxon>
        <taxon>Dictyosteliaceae</taxon>
        <taxon>Dictyostelium</taxon>
    </lineage>
</organism>
<name>PSD10_DICDI</name>
<proteinExistence type="evidence at transcript level"/>
<keyword id="KW-0040">ANK repeat</keyword>
<keyword id="KW-0143">Chaperone</keyword>
<keyword id="KW-1185">Reference proteome</keyword>
<keyword id="KW-0677">Repeat</keyword>
<protein>
    <recommendedName>
        <fullName>26S proteasome non-ATPase regulatory subunit 10</fullName>
    </recommendedName>
    <alternativeName>
        <fullName>26S proteasome regulatory subunit p28</fullName>
    </alternativeName>
</protein>
<comment type="function">
    <text evidence="1">Acts as a chaperone during the assembly of the 26S proteasome, specifically of the 19S regulatory complex (RC).</text>
</comment>
<reference key="1">
    <citation type="journal article" date="2005" name="Nature">
        <title>The genome of the social amoeba Dictyostelium discoideum.</title>
        <authorList>
            <person name="Eichinger L."/>
            <person name="Pachebat J.A."/>
            <person name="Gloeckner G."/>
            <person name="Rajandream M.A."/>
            <person name="Sucgang R."/>
            <person name="Berriman M."/>
            <person name="Song J."/>
            <person name="Olsen R."/>
            <person name="Szafranski K."/>
            <person name="Xu Q."/>
            <person name="Tunggal B."/>
            <person name="Kummerfeld S."/>
            <person name="Madera M."/>
            <person name="Konfortov B.A."/>
            <person name="Rivero F."/>
            <person name="Bankier A.T."/>
            <person name="Lehmann R."/>
            <person name="Hamlin N."/>
            <person name="Davies R."/>
            <person name="Gaudet P."/>
            <person name="Fey P."/>
            <person name="Pilcher K."/>
            <person name="Chen G."/>
            <person name="Saunders D."/>
            <person name="Sodergren E.J."/>
            <person name="Davis P."/>
            <person name="Kerhornou A."/>
            <person name="Nie X."/>
            <person name="Hall N."/>
            <person name="Anjard C."/>
            <person name="Hemphill L."/>
            <person name="Bason N."/>
            <person name="Farbrother P."/>
            <person name="Desany B."/>
            <person name="Just E."/>
            <person name="Morio T."/>
            <person name="Rost R."/>
            <person name="Churcher C.M."/>
            <person name="Cooper J."/>
            <person name="Haydock S."/>
            <person name="van Driessche N."/>
            <person name="Cronin A."/>
            <person name="Goodhead I."/>
            <person name="Muzny D.M."/>
            <person name="Mourier T."/>
            <person name="Pain A."/>
            <person name="Lu M."/>
            <person name="Harper D."/>
            <person name="Lindsay R."/>
            <person name="Hauser H."/>
            <person name="James K.D."/>
            <person name="Quiles M."/>
            <person name="Madan Babu M."/>
            <person name="Saito T."/>
            <person name="Buchrieser C."/>
            <person name="Wardroper A."/>
            <person name="Felder M."/>
            <person name="Thangavelu M."/>
            <person name="Johnson D."/>
            <person name="Knights A."/>
            <person name="Loulseged H."/>
            <person name="Mungall K.L."/>
            <person name="Oliver K."/>
            <person name="Price C."/>
            <person name="Quail M.A."/>
            <person name="Urushihara H."/>
            <person name="Hernandez J."/>
            <person name="Rabbinowitsch E."/>
            <person name="Steffen D."/>
            <person name="Sanders M."/>
            <person name="Ma J."/>
            <person name="Kohara Y."/>
            <person name="Sharp S."/>
            <person name="Simmonds M.N."/>
            <person name="Spiegler S."/>
            <person name="Tivey A."/>
            <person name="Sugano S."/>
            <person name="White B."/>
            <person name="Walker D."/>
            <person name="Woodward J.R."/>
            <person name="Winckler T."/>
            <person name="Tanaka Y."/>
            <person name="Shaulsky G."/>
            <person name="Schleicher M."/>
            <person name="Weinstock G.M."/>
            <person name="Rosenthal A."/>
            <person name="Cox E.C."/>
            <person name="Chisholm R.L."/>
            <person name="Gibbs R.A."/>
            <person name="Loomis W.F."/>
            <person name="Platzer M."/>
            <person name="Kay R.R."/>
            <person name="Williams J.G."/>
            <person name="Dear P.H."/>
            <person name="Noegel A.A."/>
            <person name="Barrell B.G."/>
            <person name="Kuspa A."/>
        </authorList>
    </citation>
    <scope>NUCLEOTIDE SEQUENCE [LARGE SCALE GENOMIC DNA]</scope>
    <source>
        <strain>AX4</strain>
    </source>
</reference>
<feature type="chain" id="PRO_0000327791" description="26S proteasome non-ATPase regulatory subunit 10">
    <location>
        <begin position="1"/>
        <end position="232"/>
    </location>
</feature>
<feature type="repeat" description="ANK 1">
    <location>
        <begin position="45"/>
        <end position="75"/>
    </location>
</feature>
<feature type="repeat" description="ANK 2">
    <location>
        <begin position="79"/>
        <end position="108"/>
    </location>
</feature>
<feature type="repeat" description="ANK 3">
    <location>
        <begin position="112"/>
        <end position="141"/>
    </location>
</feature>
<feature type="repeat" description="ANK 4">
    <location>
        <begin position="144"/>
        <end position="173"/>
    </location>
</feature>
<feature type="repeat" description="ANK 5">
    <location>
        <begin position="177"/>
        <end position="206"/>
    </location>
</feature>
<feature type="repeat" description="ANK 6">
    <location>
        <begin position="210"/>
        <end position="232"/>
    </location>
</feature>
<gene>
    <name type="primary">psmD10</name>
    <name type="ORF">DDB_G0289189</name>
</gene>
<sequence length="232" mass="25307">MSGTKFRTGGTKEDDLLEFVKVGKLLEVKDLIENQGVKADCKDEDERTPLHWAAAKGQISVAQYLMDNCKCSPNTNDDGGWTPLTSATSAGHTHMVKLLLEFGADPNTVNDSKRTPLHYASSKGRSDIVDLLLTHGAKNRKDDTGSAPIHRASSNGSVATVERLLKGEANINSTNNEGDTPLHIAAEYNHEDVVECLLKHGADTTIENKDSKTPIDMSSSQTIKYLIKEFKK</sequence>
<dbReference type="EMBL" id="AAFI02000131">
    <property type="protein sequence ID" value="EAL62828.1"/>
    <property type="molecule type" value="Genomic_DNA"/>
</dbReference>
<dbReference type="RefSeq" id="XP_636328.1">
    <property type="nucleotide sequence ID" value="XM_631236.1"/>
</dbReference>
<dbReference type="SMR" id="Q54HW1"/>
<dbReference type="STRING" id="44689.Q54HW1"/>
<dbReference type="PaxDb" id="44689-DDB0232993"/>
<dbReference type="EnsemblProtists" id="EAL62828">
    <property type="protein sequence ID" value="EAL62828"/>
    <property type="gene ID" value="DDB_G0289189"/>
</dbReference>
<dbReference type="GeneID" id="8627001"/>
<dbReference type="KEGG" id="ddi:DDB_G0289189"/>
<dbReference type="dictyBase" id="DDB_G0289189">
    <property type="gene designation" value="psmD10"/>
</dbReference>
<dbReference type="VEuPathDB" id="AmoebaDB:DDB_G0289189"/>
<dbReference type="eggNOG" id="KOG4412">
    <property type="taxonomic scope" value="Eukaryota"/>
</dbReference>
<dbReference type="HOGENOM" id="CLU_000134_18_2_1"/>
<dbReference type="InParanoid" id="Q54HW1"/>
<dbReference type="OMA" id="WAVAYNR"/>
<dbReference type="PhylomeDB" id="Q54HW1"/>
<dbReference type="Reactome" id="R-DDI-9907900">
    <property type="pathway name" value="Proteasome assembly"/>
</dbReference>
<dbReference type="PRO" id="PR:Q54HW1"/>
<dbReference type="Proteomes" id="UP000002195">
    <property type="component" value="Chromosome 5"/>
</dbReference>
<dbReference type="FunFam" id="1.25.40.20:FF:000168">
    <property type="entry name" value="Myosin XVI"/>
    <property type="match status" value="1"/>
</dbReference>
<dbReference type="Gene3D" id="1.25.40.20">
    <property type="entry name" value="Ankyrin repeat-containing domain"/>
    <property type="match status" value="2"/>
</dbReference>
<dbReference type="InterPro" id="IPR002110">
    <property type="entry name" value="Ankyrin_rpt"/>
</dbReference>
<dbReference type="InterPro" id="IPR036770">
    <property type="entry name" value="Ankyrin_rpt-contain_sf"/>
</dbReference>
<dbReference type="PANTHER" id="PTHR24171">
    <property type="entry name" value="ANKYRIN REPEAT DOMAIN-CONTAINING PROTEIN 39-RELATED"/>
    <property type="match status" value="1"/>
</dbReference>
<dbReference type="PANTHER" id="PTHR24171:SF8">
    <property type="entry name" value="BRCA1-ASSOCIATED RING DOMAIN PROTEIN 1"/>
    <property type="match status" value="1"/>
</dbReference>
<dbReference type="Pfam" id="PF12796">
    <property type="entry name" value="Ank_2"/>
    <property type="match status" value="2"/>
</dbReference>
<dbReference type="PRINTS" id="PR01415">
    <property type="entry name" value="ANKYRIN"/>
</dbReference>
<dbReference type="SMART" id="SM00248">
    <property type="entry name" value="ANK"/>
    <property type="match status" value="5"/>
</dbReference>
<dbReference type="SUPFAM" id="SSF48403">
    <property type="entry name" value="Ankyrin repeat"/>
    <property type="match status" value="1"/>
</dbReference>
<dbReference type="PROSITE" id="PS50297">
    <property type="entry name" value="ANK_REP_REGION"/>
    <property type="match status" value="1"/>
</dbReference>
<dbReference type="PROSITE" id="PS50088">
    <property type="entry name" value="ANK_REPEAT"/>
    <property type="match status" value="5"/>
</dbReference>
<evidence type="ECO:0000250" key="1"/>